<dbReference type="EC" id="1.7.2.-" evidence="7"/>
<dbReference type="EMBL" id="BT136117">
    <property type="protein sequence ID" value="AFK35912.1"/>
    <property type="molecule type" value="mRNA"/>
</dbReference>
<dbReference type="EMBL" id="CM001220">
    <property type="protein sequence ID" value="KEH30376.1"/>
    <property type="molecule type" value="Genomic_DNA"/>
</dbReference>
<dbReference type="EMBL" id="CM001220">
    <property type="protein sequence ID" value="KEH30377.1"/>
    <property type="molecule type" value="Genomic_DNA"/>
</dbReference>
<dbReference type="EMBL" id="CM001220">
    <property type="protein sequence ID" value="KEH30378.1"/>
    <property type="molecule type" value="Genomic_DNA"/>
</dbReference>
<dbReference type="EMBL" id="CM001220">
    <property type="protein sequence ID" value="KEH30379.1"/>
    <property type="molecule type" value="Genomic_DNA"/>
</dbReference>
<dbReference type="EMBL" id="PSQE01000004">
    <property type="protein sequence ID" value="RHN61225.1"/>
    <property type="molecule type" value="Genomic_DNA"/>
</dbReference>
<dbReference type="RefSeq" id="XP_013456345.1">
    <molecule id="A0A072ULZ1-1"/>
    <property type="nucleotide sequence ID" value="XM_013600891.1"/>
</dbReference>
<dbReference type="RefSeq" id="XP_013456346.1">
    <property type="nucleotide sequence ID" value="XM_013600892.1"/>
</dbReference>
<dbReference type="RefSeq" id="XP_013456347.1">
    <property type="nucleotide sequence ID" value="XM_013600893.1"/>
</dbReference>
<dbReference type="RefSeq" id="XP_013456348.1">
    <molecule id="A0A072ULZ1-2"/>
    <property type="nucleotide sequence ID" value="XM_013600894.1"/>
</dbReference>
<dbReference type="SMR" id="A0A072ULZ1"/>
<dbReference type="STRING" id="3880.A0A072ULZ1"/>
<dbReference type="EnsemblPlants" id="rna23665">
    <molecule id="A0A072ULZ1-1"/>
    <property type="protein sequence ID" value="RHN61225.1"/>
    <property type="gene ID" value="gene23665"/>
</dbReference>
<dbReference type="GeneID" id="25492697"/>
<dbReference type="Gramene" id="rna23665">
    <molecule id="A0A072ULZ1-1"/>
    <property type="protein sequence ID" value="RHN61225.1"/>
    <property type="gene ID" value="gene23665"/>
</dbReference>
<dbReference type="KEGG" id="mtr:25492697"/>
<dbReference type="HOGENOM" id="CLU_795392_0_0_1"/>
<dbReference type="OrthoDB" id="436496at2759"/>
<dbReference type="Proteomes" id="UP000002051">
    <property type="component" value="Chromosome 4"/>
</dbReference>
<dbReference type="Proteomes" id="UP000265566">
    <property type="component" value="Chromosome 4"/>
</dbReference>
<dbReference type="ExpressionAtlas" id="A0A072ULZ1">
    <property type="expression patterns" value="differential"/>
</dbReference>
<dbReference type="GO" id="GO:0005737">
    <property type="term" value="C:cytoplasm"/>
    <property type="evidence" value="ECO:0007669"/>
    <property type="project" value="UniProtKB-SubCell"/>
</dbReference>
<dbReference type="GO" id="GO:0005634">
    <property type="term" value="C:nucleus"/>
    <property type="evidence" value="ECO:0007669"/>
    <property type="project" value="UniProtKB-SubCell"/>
</dbReference>
<dbReference type="GO" id="GO:0020037">
    <property type="term" value="F:heme binding"/>
    <property type="evidence" value="ECO:0007669"/>
    <property type="project" value="InterPro"/>
</dbReference>
<dbReference type="GO" id="GO:0046872">
    <property type="term" value="F:metal ion binding"/>
    <property type="evidence" value="ECO:0007669"/>
    <property type="project" value="UniProtKB-KW"/>
</dbReference>
<dbReference type="GO" id="GO:0016491">
    <property type="term" value="F:oxidoreductase activity"/>
    <property type="evidence" value="ECO:0007669"/>
    <property type="project" value="UniProtKB-KW"/>
</dbReference>
<dbReference type="GO" id="GO:0019825">
    <property type="term" value="F:oxygen binding"/>
    <property type="evidence" value="ECO:0007669"/>
    <property type="project" value="InterPro"/>
</dbReference>
<dbReference type="GO" id="GO:0005344">
    <property type="term" value="F:oxygen carrier activity"/>
    <property type="evidence" value="ECO:0007669"/>
    <property type="project" value="UniProtKB-KW"/>
</dbReference>
<dbReference type="GO" id="GO:0009877">
    <property type="term" value="P:nodulation"/>
    <property type="evidence" value="ECO:0007669"/>
    <property type="project" value="UniProtKB-KW"/>
</dbReference>
<dbReference type="GO" id="GO:0060359">
    <property type="term" value="P:response to ammonium ion"/>
    <property type="evidence" value="ECO:0000270"/>
    <property type="project" value="UniProtKB"/>
</dbReference>
<dbReference type="GO" id="GO:0001666">
    <property type="term" value="P:response to hypoxia"/>
    <property type="evidence" value="ECO:0000270"/>
    <property type="project" value="UniProtKB"/>
</dbReference>
<dbReference type="GO" id="GO:0010167">
    <property type="term" value="P:response to nitrate"/>
    <property type="evidence" value="ECO:0000270"/>
    <property type="project" value="UniProtKB"/>
</dbReference>
<dbReference type="GO" id="GO:0071731">
    <property type="term" value="P:response to nitric oxide"/>
    <property type="evidence" value="ECO:0000270"/>
    <property type="project" value="UniProtKB"/>
</dbReference>
<dbReference type="GO" id="GO:0009609">
    <property type="term" value="P:response to symbiotic bacterium"/>
    <property type="evidence" value="ECO:0000270"/>
    <property type="project" value="UniProtKB"/>
</dbReference>
<dbReference type="CDD" id="cd14784">
    <property type="entry name" value="class1_nsHb-like"/>
    <property type="match status" value="1"/>
</dbReference>
<dbReference type="Gene3D" id="1.10.490.10">
    <property type="entry name" value="Globins"/>
    <property type="match status" value="2"/>
</dbReference>
<dbReference type="InterPro" id="IPR000971">
    <property type="entry name" value="Globin"/>
</dbReference>
<dbReference type="InterPro" id="IPR009050">
    <property type="entry name" value="Globin-like_sf"/>
</dbReference>
<dbReference type="InterPro" id="IPR012292">
    <property type="entry name" value="Globin/Proto"/>
</dbReference>
<dbReference type="InterPro" id="IPR001032">
    <property type="entry name" value="Leghaemoglobin-like"/>
</dbReference>
<dbReference type="InterPro" id="IPR019824">
    <property type="entry name" value="Leghaemoglobin_Fe_BS"/>
</dbReference>
<dbReference type="PANTHER" id="PTHR22924">
    <property type="entry name" value="LEGHEMOGLOBIN-RELATED"/>
    <property type="match status" value="1"/>
</dbReference>
<dbReference type="PANTHER" id="PTHR22924:SF89">
    <property type="entry name" value="NON-SYMBIOTIC HEMOGLOBIN"/>
    <property type="match status" value="1"/>
</dbReference>
<dbReference type="Pfam" id="PF00042">
    <property type="entry name" value="Globin"/>
    <property type="match status" value="2"/>
</dbReference>
<dbReference type="PRINTS" id="PR00188">
    <property type="entry name" value="PLANTGLOBIN"/>
</dbReference>
<dbReference type="SUPFAM" id="SSF46458">
    <property type="entry name" value="Globin-like"/>
    <property type="match status" value="2"/>
</dbReference>
<dbReference type="PROSITE" id="PS01033">
    <property type="entry name" value="GLOBIN"/>
    <property type="match status" value="2"/>
</dbReference>
<dbReference type="PROSITE" id="PS00208">
    <property type="entry name" value="PLANT_GLOBIN"/>
    <property type="match status" value="2"/>
</dbReference>
<name>GLB12_MEDTR</name>
<reference key="1">
    <citation type="submission" date="2012-05" db="EMBL/GenBank/DDBJ databases">
        <authorList>
            <person name="Krishnakumar V."/>
            <person name="Cheung F."/>
            <person name="Xiao Y."/>
            <person name="Chan A."/>
            <person name="Moskal W.A."/>
            <person name="Town C.D."/>
        </authorList>
    </citation>
    <scope>NUCLEOTIDE SEQUENCE [MRNA] (ISOFORM 5)</scope>
</reference>
<reference key="2">
    <citation type="journal article" date="2011" name="Nature">
        <title>The Medicago genome provides insight into the evolution of rhizobial symbioses.</title>
        <authorList>
            <person name="Young N.D."/>
            <person name="Debelle F."/>
            <person name="Oldroyd G.E.D."/>
            <person name="Geurts R."/>
            <person name="Cannon S.B."/>
            <person name="Udvardi M.K."/>
            <person name="Benedito V.A."/>
            <person name="Mayer K.F.X."/>
            <person name="Gouzy J."/>
            <person name="Schoof H."/>
            <person name="Van de Peer Y."/>
            <person name="Proost S."/>
            <person name="Cook D.R."/>
            <person name="Meyers B.C."/>
            <person name="Spannagl M."/>
            <person name="Cheung F."/>
            <person name="De Mita S."/>
            <person name="Krishnakumar V."/>
            <person name="Gundlach H."/>
            <person name="Zhou S."/>
            <person name="Mudge J."/>
            <person name="Bharti A.K."/>
            <person name="Murray J.D."/>
            <person name="Naoumkina M.A."/>
            <person name="Rosen B."/>
            <person name="Silverstein K.A.T."/>
            <person name="Tang H."/>
            <person name="Rombauts S."/>
            <person name="Zhao P.X."/>
            <person name="Zhou P."/>
            <person name="Barbe V."/>
            <person name="Bardou P."/>
            <person name="Bechner M."/>
            <person name="Bellec A."/>
            <person name="Berger A."/>
            <person name="Berges H."/>
            <person name="Bidwell S."/>
            <person name="Bisseling T."/>
            <person name="Choisne N."/>
            <person name="Couloux A."/>
            <person name="Denny R."/>
            <person name="Deshpande S."/>
            <person name="Dai X."/>
            <person name="Doyle J.J."/>
            <person name="Dudez A.-M."/>
            <person name="Farmer A.D."/>
            <person name="Fouteau S."/>
            <person name="Franken C."/>
            <person name="Gibelin C."/>
            <person name="Gish J."/>
            <person name="Goldstein S."/>
            <person name="Gonzalez A.J."/>
            <person name="Green P.J."/>
            <person name="Hallab A."/>
            <person name="Hartog M."/>
            <person name="Hua A."/>
            <person name="Humphray S.J."/>
            <person name="Jeong D.-H."/>
            <person name="Jing Y."/>
            <person name="Jocker A."/>
            <person name="Kenton S.M."/>
            <person name="Kim D.-J."/>
            <person name="Klee K."/>
            <person name="Lai H."/>
            <person name="Lang C."/>
            <person name="Lin S."/>
            <person name="Macmil S.L."/>
            <person name="Magdelenat G."/>
            <person name="Matthews L."/>
            <person name="McCorrison J."/>
            <person name="Monaghan E.L."/>
            <person name="Mun J.-H."/>
            <person name="Najar F.Z."/>
            <person name="Nicholson C."/>
            <person name="Noirot C."/>
            <person name="O'Bleness M."/>
            <person name="Paule C.R."/>
            <person name="Poulain J."/>
            <person name="Prion F."/>
            <person name="Qin B."/>
            <person name="Qu C."/>
            <person name="Retzel E.F."/>
            <person name="Riddle C."/>
            <person name="Sallet E."/>
            <person name="Samain S."/>
            <person name="Samson N."/>
            <person name="Sanders I."/>
            <person name="Saurat O."/>
            <person name="Scarpelli C."/>
            <person name="Schiex T."/>
            <person name="Segurens B."/>
            <person name="Severin A.J."/>
            <person name="Sherrier D.J."/>
            <person name="Shi R."/>
            <person name="Sims S."/>
            <person name="Singer S.R."/>
            <person name="Sinharoy S."/>
            <person name="Sterck L."/>
            <person name="Viollet A."/>
            <person name="Wang B.-B."/>
            <person name="Wang K."/>
            <person name="Wang M."/>
            <person name="Wang X."/>
            <person name="Warfsmann J."/>
            <person name="Weissenbach J."/>
            <person name="White D.D."/>
            <person name="White J.D."/>
            <person name="Wiley G.B."/>
            <person name="Wincker P."/>
            <person name="Xing Y."/>
            <person name="Yang L."/>
            <person name="Yao Z."/>
            <person name="Ying F."/>
            <person name="Zhai J."/>
            <person name="Zhou L."/>
            <person name="Zuber A."/>
            <person name="Denarie J."/>
            <person name="Dixon R.A."/>
            <person name="May G.D."/>
            <person name="Schwartz D.C."/>
            <person name="Rogers J."/>
            <person name="Quetier F."/>
            <person name="Town C.D."/>
            <person name="Roe B.A."/>
        </authorList>
    </citation>
    <scope>NUCLEOTIDE SEQUENCE [LARGE SCALE GENOMIC DNA]</scope>
    <source>
        <strain>cv. Jemalong A17</strain>
    </source>
</reference>
<reference key="3">
    <citation type="journal article" date="2014" name="BMC Genomics">
        <title>An improved genome release (version Mt4.0) for the model legume Medicago truncatula.</title>
        <authorList>
            <person name="Tang H."/>
            <person name="Krishnakumar V."/>
            <person name="Bidwell S."/>
            <person name="Rosen B."/>
            <person name="Chan A."/>
            <person name="Zhou S."/>
            <person name="Gentzbittel L."/>
            <person name="Childs K.L."/>
            <person name="Yandell M."/>
            <person name="Gundlach H."/>
            <person name="Mayer K.F."/>
            <person name="Schwartz D.C."/>
            <person name="Town C.D."/>
        </authorList>
    </citation>
    <scope>GENOME REANNOTATION</scope>
    <source>
        <strain>cv. Jemalong A17</strain>
    </source>
</reference>
<reference key="4">
    <citation type="journal article" date="2018" name="Nat. Plants">
        <title>Whole-genome landscape of Medicago truncatula symbiotic genes.</title>
        <authorList>
            <person name="Pecrix Y."/>
            <person name="Staton S.E."/>
            <person name="Sallet E."/>
            <person name="Lelandais-Briere C."/>
            <person name="Moreau S."/>
            <person name="Carrere S."/>
            <person name="Blein T."/>
            <person name="Jardinaud M.F."/>
            <person name="Latrasse D."/>
            <person name="Zouine M."/>
            <person name="Zahm M."/>
            <person name="Kreplak J."/>
            <person name="Mayjonade B."/>
            <person name="Satge C."/>
            <person name="Perez M."/>
            <person name="Cauet S."/>
            <person name="Marande W."/>
            <person name="Chantry-Darmon C."/>
            <person name="Lopez-Roques C."/>
            <person name="Bouchez O."/>
            <person name="Berard A."/>
            <person name="Debelle F."/>
            <person name="Munos S."/>
            <person name="Bendahmane A."/>
            <person name="Berges H."/>
            <person name="Niebel A."/>
            <person name="Buitink J."/>
            <person name="Frugier F."/>
            <person name="Benhamed M."/>
            <person name="Crespi M."/>
            <person name="Gouzy J."/>
            <person name="Gamas P."/>
        </authorList>
    </citation>
    <scope>NUCLEOTIDE SEQUENCE [LARGE SCALE GENOMIC DNA]</scope>
    <source>
        <strain>cv. Jemalong A17</strain>
        <tissue>Leaf</tissue>
    </source>
</reference>
<reference key="5">
    <citation type="journal article" date="2020" name="Front. Plant Sci.">
        <title>A plant gene encoding one-heme and two-heme hemoglobins with extreme reactivities toward diatomic gases and nitrite.</title>
        <authorList>
            <person name="Villar I."/>
            <person name="Larrainzar E."/>
            <person name="Milazzo L."/>
            <person name="Perez-Rontome C."/>
            <person name="Rubio M.C."/>
            <person name="Smulevich G."/>
            <person name="Martinez J.I."/>
            <person name="Wilson M.T."/>
            <person name="Reeder B."/>
            <person name="Huertas R."/>
            <person name="Abbruzzetti S."/>
            <person name="Udvardi M."/>
            <person name="Becana M."/>
        </authorList>
    </citation>
    <scope>FUNCTION</scope>
    <scope>MUTAGENESIS OF HIS-74 AND HIS-238 (ISOFORM 2)</scope>
    <scope>MUTAGENESIS OF HIS-109 (ISOFORM 4)</scope>
    <scope>ALTERNATIVE SPLICING</scope>
    <scope>INDUCTION BY HYPOXIA AND NO SOURCE</scope>
    <scope>TISSUE SPECIFICITY</scope>
    <scope>DEVELOPMENTAL STAGE</scope>
    <scope>CATALYTIC ACTIVITY</scope>
    <scope>COFACTOR</scope>
    <source>
        <strain>cv. Jemalong A17</strain>
        <tissue>Root</tissue>
        <tissue>Root nodule</tissue>
    </source>
</reference>
<reference key="6">
    <citation type="journal article" date="2020" name="Front. Plant Sci.">
        <title>Corrigendum: A plant gene encoding one-heme and two-heme hemoglobins with extreme reactivities toward diatomic gases and nitrite.</title>
        <authorList>
            <person name="Villar I."/>
            <person name="Larrainzar E."/>
            <person name="Milazzo L."/>
            <person name="Perez-Rontome C."/>
            <person name="Rubio M.C."/>
            <person name="Smulevich G."/>
            <person name="Martinez J.I."/>
            <person name="Wilson M.T."/>
            <person name="Reeder B."/>
            <person name="Huertas R."/>
            <person name="Abbruzzetti S."/>
            <person name="Udvardi M."/>
            <person name="Becana M."/>
        </authorList>
    </citation>
    <scope>ERRATUM OF PUBMED:33329665</scope>
</reference>
<reference key="7">
    <citation type="journal article" date="2020" name="New Phytol.">
        <title>Medicago truncatula Phytoglobin 1.1 controls symbiotic nodulation and nitrogen fixation via the regulation of nitric oxide concentration.</title>
        <authorList>
            <person name="Berger A."/>
            <person name="Guinand S."/>
            <person name="Boscari A."/>
            <person name="Puppo A."/>
            <person name="Brouquisse R."/>
        </authorList>
    </citation>
    <scope>DEVELOPMENTAL STAGE</scope>
    <scope>INDUCTION BY NITRIC OXIDE</scope>
    <scope>GENE FAMILY</scope>
    <scope>NOMENCLATURE</scope>
    <source>
        <strain>cv. Jemalong A17</strain>
    </source>
</reference>
<feature type="chain" id="PRO_0000460308" description="Anaerobic nitrite reductase Glb1-2">
    <location>
        <begin position="1"/>
        <end position="351"/>
    </location>
</feature>
<feature type="domain" description="Globin 1" evidence="4">
    <location>
        <begin position="13"/>
        <end position="162"/>
    </location>
</feature>
<feature type="domain" description="Globin 2" evidence="4">
    <location>
        <begin position="184"/>
        <end position="333"/>
    </location>
</feature>
<feature type="region of interest" description="Disordered" evidence="5">
    <location>
        <begin position="331"/>
        <end position="351"/>
    </location>
</feature>
<feature type="binding site" evidence="3">
    <location>
        <position position="56"/>
    </location>
    <ligand>
        <name>heme b</name>
        <dbReference type="ChEBI" id="CHEBI:60344"/>
        <label>1</label>
    </ligand>
</feature>
<feature type="binding site" evidence="2">
    <location>
        <position position="70"/>
    </location>
    <ligand>
        <name>heme b</name>
        <dbReference type="ChEBI" id="CHEBI:60344"/>
        <label>1</label>
    </ligand>
</feature>
<feature type="binding site" description="distal binding residue" evidence="4">
    <location>
        <position position="74"/>
    </location>
    <ligand>
        <name>heme b</name>
        <dbReference type="ChEBI" id="CHEBI:60344"/>
        <label>1</label>
    </ligand>
    <ligandPart>
        <name>Fe</name>
        <dbReference type="ChEBI" id="CHEBI:18248"/>
    </ligandPart>
</feature>
<feature type="binding site" evidence="2">
    <location>
        <position position="104"/>
    </location>
    <ligand>
        <name>heme b</name>
        <dbReference type="ChEBI" id="CHEBI:60344"/>
        <label>1</label>
    </ligand>
</feature>
<feature type="binding site" evidence="2">
    <location>
        <position position="108"/>
    </location>
    <ligand>
        <name>heme b</name>
        <dbReference type="ChEBI" id="CHEBI:60344"/>
        <label>1</label>
    </ligand>
</feature>
<feature type="binding site" description="proximal binding residue" evidence="4">
    <location>
        <position position="109"/>
    </location>
    <ligand>
        <name>heme b</name>
        <dbReference type="ChEBI" id="CHEBI:60344"/>
        <label>1</label>
    </ligand>
    <ligandPart>
        <name>Fe</name>
        <dbReference type="ChEBI" id="CHEBI:18248"/>
    </ligandPart>
</feature>
<feature type="binding site" evidence="3">
    <location>
        <position position="227"/>
    </location>
    <ligand>
        <name>heme b</name>
        <dbReference type="ChEBI" id="CHEBI:60344"/>
        <label>2</label>
    </ligand>
</feature>
<feature type="binding site" evidence="2">
    <location>
        <position position="241"/>
    </location>
    <ligand>
        <name>heme b</name>
        <dbReference type="ChEBI" id="CHEBI:60344"/>
        <label>2</label>
    </ligand>
</feature>
<feature type="binding site" description="distal binding residue" evidence="4">
    <location>
        <position position="245"/>
    </location>
    <ligand>
        <name>heme b</name>
        <dbReference type="ChEBI" id="CHEBI:60344"/>
        <label>2</label>
    </ligand>
    <ligandPart>
        <name>Fe</name>
        <dbReference type="ChEBI" id="CHEBI:18248"/>
    </ligandPart>
</feature>
<feature type="binding site" evidence="2">
    <location>
        <position position="275"/>
    </location>
    <ligand>
        <name>heme b</name>
        <dbReference type="ChEBI" id="CHEBI:60344"/>
        <label>2</label>
    </ligand>
</feature>
<feature type="binding site" evidence="2">
    <location>
        <position position="279"/>
    </location>
    <ligand>
        <name>heme b</name>
        <dbReference type="ChEBI" id="CHEBI:60344"/>
        <label>2</label>
    </ligand>
</feature>
<feature type="binding site" description="proximal binding residue" evidence="4">
    <location>
        <position position="280"/>
    </location>
    <ligand>
        <name>heme b</name>
        <dbReference type="ChEBI" id="CHEBI:60344"/>
        <label>2</label>
    </ligand>
    <ligandPart>
        <name>Fe</name>
        <dbReference type="ChEBI" id="CHEBI:18248"/>
    </ligandPart>
</feature>
<feature type="splice variant" id="VSP_062296" description="In isoform 5.">
    <location>
        <begin position="1"/>
        <end position="176"/>
    </location>
</feature>
<feature type="splice variant" id="VSP_062297" description="In isoform 4.">
    <location>
        <begin position="1"/>
        <end position="136"/>
    </location>
</feature>
<feature type="splice variant" id="VSP_062298" description="In isoform 3.">
    <location>
        <begin position="1"/>
        <end position="53"/>
    </location>
</feature>
<feature type="splice variant" id="VSP_062299" description="In isoform 2.">
    <original>INMEENTG</original>
    <variation>S</variation>
    <location>
        <begin position="175"/>
        <end position="182"/>
    </location>
</feature>
<feature type="mutagenesis site" description="Altered heme b 1 binding leading to reduced activity. Altered heme b 1 and heme b 2 binding leading to lost activity; when associated with L-238." evidence="7">
    <original>H</original>
    <variation>L</variation>
    <location sequence="A0A072ULZ1-2">
        <position position="74"/>
    </location>
</feature>
<feature type="mutagenesis site" description="Altered heme b 2 binding leading to reduced activity. Altered heme b 1 and heme b 2 binding leading to lost activity; when associated with L-74." evidence="7">
    <original>H</original>
    <variation>L</variation>
    <location sequence="A0A072ULZ1-2">
        <position position="238"/>
    </location>
</feature>
<feature type="mutagenesis site" description="Altered heme b 1 binding leading to lost activity." evidence="7">
    <original>H</original>
    <variation>L</variation>
    <location sequence="A0A072ULZ1-4">
        <position position="109"/>
    </location>
</feature>
<evidence type="ECO:0000250" key="1">
    <source>
        <dbReference type="UniProtKB" id="A2XE98"/>
    </source>
</evidence>
<evidence type="ECO:0000250" key="2">
    <source>
        <dbReference type="UniProtKB" id="O04986"/>
    </source>
</evidence>
<evidence type="ECO:0000250" key="3">
    <source>
        <dbReference type="UniProtKB" id="P68168"/>
    </source>
</evidence>
<evidence type="ECO:0000255" key="4">
    <source>
        <dbReference type="PROSITE-ProRule" id="PRU00238"/>
    </source>
</evidence>
<evidence type="ECO:0000256" key="5">
    <source>
        <dbReference type="SAM" id="MobiDB-lite"/>
    </source>
</evidence>
<evidence type="ECO:0000269" key="6">
    <source>
    </source>
</evidence>
<evidence type="ECO:0000269" key="7">
    <source>
    </source>
</evidence>
<evidence type="ECO:0000303" key="8">
    <source>
    </source>
</evidence>
<evidence type="ECO:0000303" key="9">
    <source>
    </source>
</evidence>
<evidence type="ECO:0000305" key="10"/>
<evidence type="ECO:0000312" key="11">
    <source>
        <dbReference type="EMBL" id="KEH30376.1"/>
    </source>
</evidence>
<evidence type="ECO:0000312" key="12">
    <source>
        <dbReference type="EMBL" id="RHN61225.1"/>
    </source>
</evidence>
<gene>
    <name evidence="9" type="primary">Glb1-2</name>
    <name evidence="11" type="ordered locus">MTR_4g068870</name>
    <name evidence="9" type="ordered locus">Medtr4g068870</name>
    <name evidence="12" type="ORF">MtrunA17_Chr4g0034311</name>
</gene>
<organism>
    <name type="scientific">Medicago truncatula</name>
    <name type="common">Barrel medic</name>
    <name type="synonym">Medicago tribuloides</name>
    <dbReference type="NCBI Taxonomy" id="3880"/>
    <lineage>
        <taxon>Eukaryota</taxon>
        <taxon>Viridiplantae</taxon>
        <taxon>Streptophyta</taxon>
        <taxon>Embryophyta</taxon>
        <taxon>Tracheophyta</taxon>
        <taxon>Spermatophyta</taxon>
        <taxon>Magnoliopsida</taxon>
        <taxon>eudicotyledons</taxon>
        <taxon>Gunneridae</taxon>
        <taxon>Pentapetalae</taxon>
        <taxon>rosids</taxon>
        <taxon>fabids</taxon>
        <taxon>Fabales</taxon>
        <taxon>Fabaceae</taxon>
        <taxon>Papilionoideae</taxon>
        <taxon>50 kb inversion clade</taxon>
        <taxon>NPAAA clade</taxon>
        <taxon>Hologalegina</taxon>
        <taxon>IRL clade</taxon>
        <taxon>Trifolieae</taxon>
        <taxon>Medicago</taxon>
    </lineage>
</organism>
<protein>
    <recommendedName>
        <fullName evidence="2">Anaerobic nitrite reductase Glb1-2</fullName>
        <ecNumber evidence="7">1.7.2.-</ecNumber>
    </recommendedName>
    <alternativeName>
        <fullName evidence="9">Non-symbiotic hemoglobin 1-2</fullName>
        <shortName evidence="9">MtGlb1-2</shortName>
    </alternativeName>
    <alternativeName>
        <fullName evidence="8">Phytoglobin 1.2</fullName>
        <shortName evidence="8">Phytogb1.2</shortName>
    </alternativeName>
</protein>
<accession>A0A072ULZ1</accession>
<accession>A0A072UKY8</accession>
<accession>A0A072UL30</accession>
<accession>A0A072UMY0</accession>
<accession>I3S6M0</accession>
<keyword id="KW-0025">Alternative splicing</keyword>
<keyword id="KW-0963">Cytoplasm</keyword>
<keyword id="KW-0349">Heme</keyword>
<keyword id="KW-0408">Iron</keyword>
<keyword id="KW-0479">Metal-binding</keyword>
<keyword id="KW-0536">Nodulation</keyword>
<keyword id="KW-0539">Nucleus</keyword>
<keyword id="KW-0560">Oxidoreductase</keyword>
<keyword id="KW-0561">Oxygen transport</keyword>
<keyword id="KW-1185">Reference proteome</keyword>
<keyword id="KW-0677">Repeat</keyword>
<keyword id="KW-0813">Transport</keyword>
<comment type="function">
    <text evidence="2 7">Phytoglobin that regulates the fine tuning of nitric oxide (NO) concentration in the cytosol in response to sudden changes in O(2) availability, and performs both symbiotic and nonsymbiotic functions (PubMed:33329665). Exhibits NO dioxygenase activity in the presence of O(2) but nitrite reductase (NiR) activity in the absence of O(2) (e.g. during flooding or in waterlogged soil) (PubMed:33329665). May not function as an oxygen storage or transport protein (By similarity). Extremely reactive toward the physiological ligands O(2), nitric oxide (NO), and nitrite with a very high affinity for O(2) through an hexacoordinate heme iron because of a very low dissociation constant (PubMed:33329665).</text>
</comment>
<comment type="function">
    <molecule>Isoform 2</molecule>
    <text evidence="7">Very high affinity for O(2) through two hexacoordinate heme irons (PubMed:33329665). Extremely reactive toward the physiological ligands O(2), nitric oxide (NO), and nitrite (PubMed:33329665).</text>
</comment>
<comment type="function">
    <molecule>Isoform 4</molecule>
    <text evidence="7">Very high affinity for O(2) through a single hexacoordinate heme iron (PubMed:33329665). Extremely reactive toward the physiological ligands O(2), nitric oxide (NO), and nitrite (PubMed:33329665).</text>
</comment>
<comment type="catalytic activity">
    <reaction evidence="7">
        <text>Fe(III)-heme b-[protein] + nitric oxide + H2O = Fe(II)-heme b-[protein] + nitrite + 2 H(+)</text>
        <dbReference type="Rhea" id="RHEA:77711"/>
        <dbReference type="Rhea" id="RHEA-COMP:18975"/>
        <dbReference type="Rhea" id="RHEA-COMP:18976"/>
        <dbReference type="ChEBI" id="CHEBI:15377"/>
        <dbReference type="ChEBI" id="CHEBI:15378"/>
        <dbReference type="ChEBI" id="CHEBI:16301"/>
        <dbReference type="ChEBI" id="CHEBI:16480"/>
        <dbReference type="ChEBI" id="CHEBI:55376"/>
        <dbReference type="ChEBI" id="CHEBI:60344"/>
    </reaction>
    <physiologicalReaction direction="left-to-right" evidence="7">
        <dbReference type="Rhea" id="RHEA:77712"/>
    </physiologicalReaction>
    <physiologicalReaction direction="right-to-left" evidence="7">
        <dbReference type="Rhea" id="RHEA:77713"/>
    </physiologicalReaction>
</comment>
<comment type="cofactor">
    <cofactor evidence="7">
        <name>heme b</name>
        <dbReference type="ChEBI" id="CHEBI:60344"/>
    </cofactor>
    <text evidence="7">Binds 2 heme groups per subunit.</text>
</comment>
<comment type="subunit">
    <text evidence="10">Monomer.</text>
</comment>
<comment type="subcellular location">
    <subcellularLocation>
        <location evidence="1">Cytoplasm</location>
    </subcellularLocation>
    <subcellularLocation>
        <location evidence="1">Nucleus</location>
    </subcellularLocation>
</comment>
<comment type="alternative products">
    <event type="alternative splicing"/>
    <isoform>
        <id>A0A072ULZ1-1</id>
        <name>1</name>
        <name evidence="9">MtGlb1-2.2</name>
        <sequence type="displayed"/>
    </isoform>
    <isoform>
        <id>A0A072ULZ1-2</id>
        <name>2</name>
        <name evidence="9">MtGlb1-2.1</name>
        <sequence type="described" ref="VSP_062299"/>
    </isoform>
    <isoform>
        <id>A0A072ULZ1-3</id>
        <name>3</name>
        <name evidence="9">MtGlb1-2.3</name>
        <sequence type="described" ref="VSP_062298"/>
    </isoform>
    <isoform>
        <id>A0A072ULZ1-4</id>
        <name>4</name>
        <name evidence="9">MtGlb1-2.4</name>
        <sequence type="described" ref="VSP_062297"/>
    </isoform>
    <isoform>
        <id>A0A072ULZ1-5</id>
        <name>5</name>
        <sequence type="described" ref="VSP_062296"/>
    </isoform>
</comment>
<comment type="tissue specificity">
    <molecule>Isoform 1</molecule>
    <text evidence="7">Predominantly expressed in nodules and roots, and, to a lesser extent, in leaves, at low levels in pods, but barely in stems, petioles, buds and flowers.</text>
</comment>
<comment type="tissue specificity">
    <molecule>Isoform 2</molecule>
    <text evidence="7">Mainly expressed in nodules and roots at low levels, and barely in leaves.</text>
</comment>
<comment type="tissue specificity">
    <molecule>Isoform 3</molecule>
    <text evidence="7">Expressed at very low levels in nodules, roots and pods.</text>
</comment>
<comment type="tissue specificity">
    <molecule>Isoform 4</molecule>
    <text evidence="7">Expressed at very low levels in nodules, roots and pods.</text>
</comment>
<comment type="developmental stage">
    <text evidence="6 7">Preferentially expressed in the meristems and vascular bundles of roots and root nodules (PubMed:33329665). During root nodulation, accumulates progressively with highest levels at the onset of nodule senescence (PubMed:32003030).</text>
</comment>
<comment type="induction">
    <text evidence="6 7">Accumulates in roots within 12 hours after inoculation with Sinorhizobium medicae ABS7, at very early stage of nodule formation (PubMed:33329665). Triggered in roots by hypoxia; this induction is enhanced by an nitric oxide (NO) source such as nitrate NO(3)(-), ammonium NH(4)(+) and S-nitrosoglutathione (GSNO) (PubMed:33329665). Up-regulated by nitric oxide (NO), particularly during nodulation mediated by Sinorhizobium meliloti inoculation (PubMed:32003030).</text>
</comment>
<comment type="induction">
    <molecule>Isoform 1</molecule>
    <text evidence="7">Induced in root nodules following supply with nitrate NO(3)(-).</text>
</comment>
<comment type="induction">
    <molecule>Isoform 2</molecule>
    <text evidence="7">Slightly induced in root nodules following supply with nitrate NO(3)(-).</text>
</comment>
<comment type="induction">
    <molecule>Isoform 3</molecule>
    <text evidence="7">Slightly induced in root nodules following supply with nitrate NO(3)(-).</text>
</comment>
<comment type="similarity">
    <text evidence="10">Belongs to the plant globin family.</text>
</comment>
<proteinExistence type="evidence at protein level"/>
<sequence length="351" mass="39609">MEENKKTVDGSVDFTEEQEALVVKSWNAMKNNSCDLSLKFFTKILEIAPPAKQMFSFLKDSNVPLEQNPKLKPHAMSVFLMTCESAVQLRKAGKVRVRESNLKKLGATHFKTGVQDEHFEVTKQALLETIEEAIPEMWSLAMKNAWAEAHDQLANAIKVEMKEAHDQMDNANLIINMEENTGSCFTEEQEALVVKSWNAIKYNSGDLSLKFFKKILEIAPPAKQLFSFLKDSNVPLEHNPKLKPHAMSVFLMTCESAVQLRKAGKVTVRESNLKKLGATHFKTGVKDEHFEVTKQALLETIKEALPEMWSPAMENAWGEAHDQLANAIKAEMKKTDHDHQTNVEDKSKPSS</sequence>